<keyword id="KW-0134">Cell wall</keyword>
<keyword id="KW-0961">Cell wall biogenesis/degradation</keyword>
<keyword id="KW-0165">Cleavage on pair of basic residues</keyword>
<keyword id="KW-0325">Glycoprotein</keyword>
<keyword id="KW-0677">Repeat</keyword>
<keyword id="KW-0964">Secreted</keyword>
<keyword id="KW-0732">Signal</keyword>
<organism>
    <name type="scientific">Saccharomyces cerevisiae (strain AWRI1631)</name>
    <name type="common">Baker's yeast</name>
    <dbReference type="NCBI Taxonomy" id="545124"/>
    <lineage>
        <taxon>Eukaryota</taxon>
        <taxon>Fungi</taxon>
        <taxon>Dikarya</taxon>
        <taxon>Ascomycota</taxon>
        <taxon>Saccharomycotina</taxon>
        <taxon>Saccharomycetes</taxon>
        <taxon>Saccharomycetales</taxon>
        <taxon>Saccharomycetaceae</taxon>
        <taxon>Saccharomyces</taxon>
    </lineage>
</organism>
<feature type="signal peptide" evidence="1">
    <location>
        <begin position="1"/>
        <end position="21"/>
    </location>
</feature>
<feature type="propeptide" id="PRO_0000377610" evidence="1">
    <location>
        <begin position="22"/>
        <end position="64"/>
    </location>
</feature>
<feature type="chain" id="PRO_0000377611" description="Cell wall mannoprotein CIS3">
    <location>
        <begin position="65"/>
        <end position="225"/>
    </location>
</feature>
<feature type="repeat" description="PIR1/2/3">
    <location>
        <begin position="65"/>
        <end position="82"/>
    </location>
</feature>
<feature type="region of interest" description="Disordered" evidence="2">
    <location>
        <begin position="78"/>
        <end position="128"/>
    </location>
</feature>
<feature type="compositionally biased region" description="Polar residues" evidence="2">
    <location>
        <begin position="78"/>
        <end position="92"/>
    </location>
</feature>
<feature type="compositionally biased region" description="Low complexity" evidence="2">
    <location>
        <begin position="93"/>
        <end position="122"/>
    </location>
</feature>
<feature type="site" description="Cleavage; by KEX2" evidence="1">
    <location>
        <begin position="64"/>
        <end position="65"/>
    </location>
</feature>
<feature type="site" description="Covalent attachment to cell wall glycan" evidence="1">
    <location>
        <position position="74"/>
    </location>
</feature>
<feature type="glycosylation site" description="O-linked (Man) serine" evidence="1">
    <location>
        <position position="68"/>
    </location>
</feature>
<feature type="glycosylation site" description="O-linked (Man) threonine" evidence="1">
    <location>
        <position position="78"/>
    </location>
</feature>
<feature type="glycosylation site" description="O-linked (Man) serine" evidence="1">
    <location>
        <position position="102"/>
    </location>
</feature>
<feature type="glycosylation site" description="O-linked (Man) serine" evidence="1">
    <location>
        <position position="103"/>
    </location>
</feature>
<feature type="glycosylation site" description="O-linked (Man) serine" evidence="1">
    <location>
        <position position="104"/>
    </location>
</feature>
<feature type="glycosylation site" description="O-linked (Man) serine" evidence="1">
    <location>
        <position position="106"/>
    </location>
</feature>
<feature type="glycosylation site" description="O-linked (Man) threonine" evidence="1">
    <location>
        <position position="108"/>
    </location>
</feature>
<feature type="glycosylation site" description="O-linked (Man) serine" evidence="1">
    <location>
        <position position="109"/>
    </location>
</feature>
<feature type="glycosylation site" description="O-linked (Man) threonine" evidence="1">
    <location>
        <position position="111"/>
    </location>
</feature>
<feature type="glycosylation site" description="O-linked (Man) threonine" evidence="1">
    <location>
        <position position="114"/>
    </location>
</feature>
<feature type="glycosylation site" description="O-linked (Man) serine" evidence="1">
    <location>
        <position position="115"/>
    </location>
</feature>
<feature type="glycosylation site" description="O-linked (Man) serine" evidence="1">
    <location>
        <position position="116"/>
    </location>
</feature>
<accession>B5VL27</accession>
<name>CIS3_YEAS6</name>
<protein>
    <recommendedName>
        <fullName>Cell wall mannoprotein CIS3</fullName>
    </recommendedName>
    <alternativeName>
        <fullName>Covalently-linked cell wall protein 5/11</fullName>
    </alternativeName>
    <alternativeName>
        <fullName>Protein with internal repeats 4</fullName>
    </alternativeName>
    <alternativeName>
        <fullName>Soluble cell wall protein 8</fullName>
    </alternativeName>
</protein>
<comment type="function">
    <text evidence="1">Component of the outer cell wall layer. Required for stability of the cell wall and for optimal growth. Required for resistance against several antifungal and cell wall-perturbing agents (By similarity).</text>
</comment>
<comment type="subcellular location">
    <subcellularLocation>
        <location evidence="1">Secreted</location>
        <location evidence="1">Cell wall</location>
    </subcellularLocation>
    <text evidence="1">Covalently attached to the cell wall. Localizes predominantly on the surface of growing buds (By similarity).</text>
</comment>
<comment type="domain">
    <text evidence="1">The PIR1/2/3 repeat is required for the covalent linkage to the cell wall.</text>
</comment>
<comment type="PTM">
    <text evidence="1">Covalently linked to beta-1,3-glucan of the inner cell wall layer via an alkali-sensitive ester linkage between the gamma-carboxyl group of glutamic acid, arising from Gln-74 within the PIR1/2/3 repeat, and hydroxyl groups of glucoses of beta-1,3-glucan chains.</text>
</comment>
<comment type="PTM">
    <text evidence="1">Extensively O-mannosylated.</text>
</comment>
<comment type="similarity">
    <text evidence="3">Belongs to the PIR protein family.</text>
</comment>
<proteinExistence type="inferred from homology"/>
<reference key="1">
    <citation type="journal article" date="2008" name="FEMS Yeast Res.">
        <title>Comparative genome analysis of a Saccharomyces cerevisiae wine strain.</title>
        <authorList>
            <person name="Borneman A.R."/>
            <person name="Forgan A.H."/>
            <person name="Pretorius I.S."/>
            <person name="Chambers P.J."/>
        </authorList>
    </citation>
    <scope>NUCLEOTIDE SEQUENCE [LARGE SCALE GENOMIC DNA]</scope>
    <source>
        <strain>AWRI1631</strain>
    </source>
</reference>
<dbReference type="EMBL" id="ABSV01001268">
    <property type="protein sequence ID" value="EDZ71363.1"/>
    <property type="molecule type" value="Genomic_DNA"/>
</dbReference>
<dbReference type="GlyCosmos" id="B5VL27">
    <property type="glycosylation" value="12 sites, No reported glycans"/>
</dbReference>
<dbReference type="Proteomes" id="UP000008988">
    <property type="component" value="Unassembled WGS sequence"/>
</dbReference>
<dbReference type="GO" id="GO:0005576">
    <property type="term" value="C:extracellular region"/>
    <property type="evidence" value="ECO:0007669"/>
    <property type="project" value="UniProtKB-KW"/>
</dbReference>
<dbReference type="GO" id="GO:0009277">
    <property type="term" value="C:fungal-type cell wall"/>
    <property type="evidence" value="ECO:0007669"/>
    <property type="project" value="TreeGrafter"/>
</dbReference>
<dbReference type="GO" id="GO:0005199">
    <property type="term" value="F:structural constituent of cell wall"/>
    <property type="evidence" value="ECO:0007669"/>
    <property type="project" value="InterPro"/>
</dbReference>
<dbReference type="GO" id="GO:0031505">
    <property type="term" value="P:fungal-type cell wall organization"/>
    <property type="evidence" value="ECO:0007669"/>
    <property type="project" value="UniProtKB-ARBA"/>
</dbReference>
<dbReference type="InterPro" id="IPR054508">
    <property type="entry name" value="PIR1-like_C"/>
</dbReference>
<dbReference type="InterPro" id="IPR051153">
    <property type="entry name" value="Yeast_CWMannoprotein_PIR"/>
</dbReference>
<dbReference type="InterPro" id="IPR000420">
    <property type="entry name" value="Yeast_PIR_rpt"/>
</dbReference>
<dbReference type="PANTHER" id="PTHR47254">
    <property type="entry name" value="CELL WALL MANNOPROTEIN CIS3-RELATED"/>
    <property type="match status" value="1"/>
</dbReference>
<dbReference type="PANTHER" id="PTHR47254:SF1">
    <property type="entry name" value="CELL WALL MANNOPROTEIN CIS3-RELATED"/>
    <property type="match status" value="1"/>
</dbReference>
<dbReference type="Pfam" id="PF00399">
    <property type="entry name" value="PIR"/>
    <property type="match status" value="1"/>
</dbReference>
<dbReference type="Pfam" id="PF22799">
    <property type="entry name" value="PIR1-like_C"/>
    <property type="match status" value="1"/>
</dbReference>
<dbReference type="PROSITE" id="PS00929">
    <property type="entry name" value="PIR_REPEAT_1"/>
    <property type="match status" value="1"/>
</dbReference>
<dbReference type="PROSITE" id="PS50256">
    <property type="entry name" value="PIR_REPEAT_2"/>
    <property type="match status" value="1"/>
</dbReference>
<gene>
    <name type="primary">CIS3</name>
    <name type="ORF">AWRI1631_100510</name>
</gene>
<sequence>MQFKNVALAASVAALSATASAEGYTPGEPWSTLTPTGSISCGAAEYTTTFGIAVQAITSSKAKRDVISQIGDGQVQATSAAATDSQVQASSTATPTSSEKISSSASKTSSTNATSSSCATPSLKDSSCKNSGTLELTLKDGVLTDAKGRIGSIVANRQFQFDGPPPQAGAIYAAGWSITEDGYLALGDSDVFYQCLSGNFYNLYDQNVAEQCSAIHLEAVSLVDC</sequence>
<evidence type="ECO:0000250" key="1"/>
<evidence type="ECO:0000256" key="2">
    <source>
        <dbReference type="SAM" id="MobiDB-lite"/>
    </source>
</evidence>
<evidence type="ECO:0000305" key="3"/>